<feature type="chain" id="PRO_0000208685" description="Cytochrome c6">
    <location>
        <begin position="1"/>
        <end position="45" status="greater than"/>
    </location>
</feature>
<feature type="binding site" description="covalent">
    <location>
        <position position="12"/>
    </location>
    <ligand>
        <name>heme c</name>
        <dbReference type="ChEBI" id="CHEBI:61717"/>
    </ligand>
</feature>
<feature type="binding site" description="covalent">
    <location>
        <position position="15"/>
    </location>
    <ligand>
        <name>heme c</name>
        <dbReference type="ChEBI" id="CHEBI:61717"/>
    </ligand>
</feature>
<feature type="binding site" description="axial binding residue">
    <location>
        <position position="16"/>
    </location>
    <ligand>
        <name>heme c</name>
        <dbReference type="ChEBI" id="CHEBI:61717"/>
    </ligand>
    <ligandPart>
        <name>Fe</name>
        <dbReference type="ChEBI" id="CHEBI:18248"/>
    </ligandPart>
</feature>
<feature type="non-terminal residue">
    <location>
        <position position="45"/>
    </location>
</feature>
<reference key="1">
    <citation type="submission" date="1998-04" db="UniProtKB">
        <authorList>
            <person name="Bullerjahn G.S."/>
        </authorList>
    </citation>
    <scope>PROTEIN SEQUENCE</scope>
    <source>
        <strain>CCAP 1490/1 / SAG 10.89 / ACC 15-2</strain>
    </source>
</reference>
<sequence length="45" mass="4487">AASGASIFSAKCAQCHLGGKNIINPTKTLSLADLQANGKDTVSAI</sequence>
<proteinExistence type="evidence at protein level"/>
<dbReference type="SMR" id="P81244"/>
<dbReference type="GO" id="GO:0031979">
    <property type="term" value="C:plasma membrane-derived thylakoid lumen"/>
    <property type="evidence" value="ECO:0007669"/>
    <property type="project" value="UniProtKB-SubCell"/>
</dbReference>
<dbReference type="GO" id="GO:0009055">
    <property type="term" value="F:electron transfer activity"/>
    <property type="evidence" value="ECO:0007669"/>
    <property type="project" value="InterPro"/>
</dbReference>
<dbReference type="GO" id="GO:0020037">
    <property type="term" value="F:heme binding"/>
    <property type="evidence" value="ECO:0007669"/>
    <property type="project" value="InterPro"/>
</dbReference>
<dbReference type="GO" id="GO:0005506">
    <property type="term" value="F:iron ion binding"/>
    <property type="evidence" value="ECO:0007669"/>
    <property type="project" value="InterPro"/>
</dbReference>
<dbReference type="GO" id="GO:0015979">
    <property type="term" value="P:photosynthesis"/>
    <property type="evidence" value="ECO:0007669"/>
    <property type="project" value="UniProtKB-KW"/>
</dbReference>
<dbReference type="Gene3D" id="1.10.760.10">
    <property type="entry name" value="Cytochrome c-like domain"/>
    <property type="match status" value="1"/>
</dbReference>
<dbReference type="InterPro" id="IPR009056">
    <property type="entry name" value="Cyt_c-like_dom"/>
</dbReference>
<dbReference type="InterPro" id="IPR036909">
    <property type="entry name" value="Cyt_c-like_dom_sf"/>
</dbReference>
<dbReference type="InterPro" id="IPR023655">
    <property type="entry name" value="Cyt_C6"/>
</dbReference>
<dbReference type="InterPro" id="IPR029490">
    <property type="entry name" value="Cytochrom_C550"/>
</dbReference>
<dbReference type="PANTHER" id="PTHR34688">
    <property type="entry name" value="CYTOCHROME C6, CHLOROPLASTIC"/>
    <property type="match status" value="1"/>
</dbReference>
<dbReference type="PANTHER" id="PTHR34688:SF2">
    <property type="entry name" value="CYTOCHROME C6, CHLOROPLASTIC"/>
    <property type="match status" value="1"/>
</dbReference>
<dbReference type="Pfam" id="PF14495">
    <property type="entry name" value="Cytochrom_C550"/>
    <property type="match status" value="1"/>
</dbReference>
<dbReference type="SUPFAM" id="SSF46626">
    <property type="entry name" value="Cytochrome c"/>
    <property type="match status" value="1"/>
</dbReference>
<dbReference type="PROSITE" id="PS51007">
    <property type="entry name" value="CYTC"/>
    <property type="match status" value="1"/>
</dbReference>
<gene>
    <name type="primary">petJ</name>
    <name type="synonym">petE2</name>
</gene>
<keyword id="KW-0903">Direct protein sequencing</keyword>
<keyword id="KW-0249">Electron transport</keyword>
<keyword id="KW-0349">Heme</keyword>
<keyword id="KW-0408">Iron</keyword>
<keyword id="KW-0479">Metal-binding</keyword>
<keyword id="KW-0602">Photosynthesis</keyword>
<keyword id="KW-0793">Thylakoid</keyword>
<keyword id="KW-0813">Transport</keyword>
<evidence type="ECO:0000250" key="1"/>
<evidence type="ECO:0000305" key="2"/>
<comment type="function">
    <text>Functions as an electron carrier between membrane-bound cytochrome b6-f and photosystem I in oxygenic photosynthesis.</text>
</comment>
<comment type="subunit">
    <text evidence="1">Monomer.</text>
</comment>
<comment type="subcellular location">
    <subcellularLocation>
        <location evidence="2">Cellular thylakoid lumen</location>
    </subcellularLocation>
</comment>
<comment type="PTM">
    <text>Binds 1 heme c group covalently per subunit.</text>
</comment>
<comment type="similarity">
    <text evidence="2">Belongs to the cytochrome c family. PetJ subfamily.</text>
</comment>
<accession>P81244</accession>
<organism>
    <name type="scientific">Prochlorothrix hollandica</name>
    <dbReference type="NCBI Taxonomy" id="1223"/>
    <lineage>
        <taxon>Bacteria</taxon>
        <taxon>Bacillati</taxon>
        <taxon>Cyanobacteriota</taxon>
        <taxon>Cyanophyceae</taxon>
        <taxon>Prochlorotrichales</taxon>
        <taxon>Prochlorotrichaceae</taxon>
        <taxon>Prochlorothrix</taxon>
    </lineage>
</organism>
<protein>
    <recommendedName>
        <fullName>Cytochrome c6</fullName>
    </recommendedName>
    <alternativeName>
        <fullName>Cytochrome c-553</fullName>
    </alternativeName>
    <alternativeName>
        <fullName>Cytochrome c553</fullName>
    </alternativeName>
    <alternativeName>
        <fullName>Soluble cytochrome f</fullName>
    </alternativeName>
</protein>
<name>CYC6_PROHO</name>